<dbReference type="EC" id="6.1.1.3" evidence="1"/>
<dbReference type="EMBL" id="AE016958">
    <property type="protein sequence ID" value="AAS05033.1"/>
    <property type="molecule type" value="Genomic_DNA"/>
</dbReference>
<dbReference type="RefSeq" id="WP_003878558.1">
    <property type="nucleotide sequence ID" value="NZ_CP106873.1"/>
</dbReference>
<dbReference type="SMR" id="Q73WE4"/>
<dbReference type="STRING" id="262316.MAP_2716c"/>
<dbReference type="KEGG" id="mpa:MAP_2716c"/>
<dbReference type="PATRIC" id="fig|262316.17.peg.2884"/>
<dbReference type="eggNOG" id="COG0441">
    <property type="taxonomic scope" value="Bacteria"/>
</dbReference>
<dbReference type="HOGENOM" id="CLU_008554_0_1_11"/>
<dbReference type="Proteomes" id="UP000000580">
    <property type="component" value="Chromosome"/>
</dbReference>
<dbReference type="GO" id="GO:0005737">
    <property type="term" value="C:cytoplasm"/>
    <property type="evidence" value="ECO:0007669"/>
    <property type="project" value="UniProtKB-SubCell"/>
</dbReference>
<dbReference type="GO" id="GO:0005524">
    <property type="term" value="F:ATP binding"/>
    <property type="evidence" value="ECO:0007669"/>
    <property type="project" value="UniProtKB-UniRule"/>
</dbReference>
<dbReference type="GO" id="GO:0046872">
    <property type="term" value="F:metal ion binding"/>
    <property type="evidence" value="ECO:0007669"/>
    <property type="project" value="UniProtKB-KW"/>
</dbReference>
<dbReference type="GO" id="GO:0004829">
    <property type="term" value="F:threonine-tRNA ligase activity"/>
    <property type="evidence" value="ECO:0007669"/>
    <property type="project" value="UniProtKB-UniRule"/>
</dbReference>
<dbReference type="GO" id="GO:0000049">
    <property type="term" value="F:tRNA binding"/>
    <property type="evidence" value="ECO:0007669"/>
    <property type="project" value="UniProtKB-KW"/>
</dbReference>
<dbReference type="GO" id="GO:0006435">
    <property type="term" value="P:threonyl-tRNA aminoacylation"/>
    <property type="evidence" value="ECO:0007669"/>
    <property type="project" value="UniProtKB-UniRule"/>
</dbReference>
<dbReference type="CDD" id="cd00860">
    <property type="entry name" value="ThrRS_anticodon"/>
    <property type="match status" value="1"/>
</dbReference>
<dbReference type="CDD" id="cd00771">
    <property type="entry name" value="ThrRS_core"/>
    <property type="match status" value="1"/>
</dbReference>
<dbReference type="FunFam" id="3.30.54.20:FF:000003">
    <property type="entry name" value="Threonine--tRNA ligase"/>
    <property type="match status" value="1"/>
</dbReference>
<dbReference type="FunFam" id="3.30.930.10:FF:000019">
    <property type="entry name" value="Threonine--tRNA ligase"/>
    <property type="match status" value="1"/>
</dbReference>
<dbReference type="FunFam" id="3.40.50.800:FF:000001">
    <property type="entry name" value="Threonine--tRNA ligase"/>
    <property type="match status" value="1"/>
</dbReference>
<dbReference type="FunFam" id="3.30.980.10:FF:000005">
    <property type="entry name" value="Threonyl-tRNA synthetase, mitochondrial"/>
    <property type="match status" value="1"/>
</dbReference>
<dbReference type="Gene3D" id="3.30.54.20">
    <property type="match status" value="1"/>
</dbReference>
<dbReference type="Gene3D" id="3.40.50.800">
    <property type="entry name" value="Anticodon-binding domain"/>
    <property type="match status" value="1"/>
</dbReference>
<dbReference type="Gene3D" id="3.30.930.10">
    <property type="entry name" value="Bira Bifunctional Protein, Domain 2"/>
    <property type="match status" value="1"/>
</dbReference>
<dbReference type="Gene3D" id="3.30.980.10">
    <property type="entry name" value="Threonyl-trna Synthetase, Chain A, domain 2"/>
    <property type="match status" value="1"/>
</dbReference>
<dbReference type="HAMAP" id="MF_00184">
    <property type="entry name" value="Thr_tRNA_synth"/>
    <property type="match status" value="1"/>
</dbReference>
<dbReference type="InterPro" id="IPR002314">
    <property type="entry name" value="aa-tRNA-synt_IIb"/>
</dbReference>
<dbReference type="InterPro" id="IPR006195">
    <property type="entry name" value="aa-tRNA-synth_II"/>
</dbReference>
<dbReference type="InterPro" id="IPR045864">
    <property type="entry name" value="aa-tRNA-synth_II/BPL/LPL"/>
</dbReference>
<dbReference type="InterPro" id="IPR004154">
    <property type="entry name" value="Anticodon-bd"/>
</dbReference>
<dbReference type="InterPro" id="IPR036621">
    <property type="entry name" value="Anticodon-bd_dom_sf"/>
</dbReference>
<dbReference type="InterPro" id="IPR004095">
    <property type="entry name" value="TGS"/>
</dbReference>
<dbReference type="InterPro" id="IPR002320">
    <property type="entry name" value="Thr-tRNA-ligase_IIa"/>
</dbReference>
<dbReference type="InterPro" id="IPR018163">
    <property type="entry name" value="Thr/Ala-tRNA-synth_IIc_edit"/>
</dbReference>
<dbReference type="InterPro" id="IPR047246">
    <property type="entry name" value="ThrRS_anticodon"/>
</dbReference>
<dbReference type="InterPro" id="IPR033728">
    <property type="entry name" value="ThrRS_core"/>
</dbReference>
<dbReference type="InterPro" id="IPR012947">
    <property type="entry name" value="tRNA_SAD"/>
</dbReference>
<dbReference type="NCBIfam" id="TIGR00418">
    <property type="entry name" value="thrS"/>
    <property type="match status" value="1"/>
</dbReference>
<dbReference type="PANTHER" id="PTHR11451:SF44">
    <property type="entry name" value="THREONINE--TRNA LIGASE, CHLOROPLASTIC_MITOCHONDRIAL 2"/>
    <property type="match status" value="1"/>
</dbReference>
<dbReference type="PANTHER" id="PTHR11451">
    <property type="entry name" value="THREONINE-TRNA LIGASE"/>
    <property type="match status" value="1"/>
</dbReference>
<dbReference type="Pfam" id="PF03129">
    <property type="entry name" value="HGTP_anticodon"/>
    <property type="match status" value="1"/>
</dbReference>
<dbReference type="Pfam" id="PF00587">
    <property type="entry name" value="tRNA-synt_2b"/>
    <property type="match status" value="1"/>
</dbReference>
<dbReference type="Pfam" id="PF07973">
    <property type="entry name" value="tRNA_SAD"/>
    <property type="match status" value="1"/>
</dbReference>
<dbReference type="PRINTS" id="PR01047">
    <property type="entry name" value="TRNASYNTHTHR"/>
</dbReference>
<dbReference type="SMART" id="SM00863">
    <property type="entry name" value="tRNA_SAD"/>
    <property type="match status" value="1"/>
</dbReference>
<dbReference type="SUPFAM" id="SSF52954">
    <property type="entry name" value="Class II aaRS ABD-related"/>
    <property type="match status" value="1"/>
</dbReference>
<dbReference type="SUPFAM" id="SSF55681">
    <property type="entry name" value="Class II aaRS and biotin synthetases"/>
    <property type="match status" value="1"/>
</dbReference>
<dbReference type="SUPFAM" id="SSF55186">
    <property type="entry name" value="ThrRS/AlaRS common domain"/>
    <property type="match status" value="1"/>
</dbReference>
<dbReference type="PROSITE" id="PS50862">
    <property type="entry name" value="AA_TRNA_LIGASE_II"/>
    <property type="match status" value="1"/>
</dbReference>
<dbReference type="PROSITE" id="PS51880">
    <property type="entry name" value="TGS"/>
    <property type="match status" value="1"/>
</dbReference>
<organism>
    <name type="scientific">Mycolicibacterium paratuberculosis (strain ATCC BAA-968 / K-10)</name>
    <name type="common">Mycobacterium paratuberculosis</name>
    <dbReference type="NCBI Taxonomy" id="262316"/>
    <lineage>
        <taxon>Bacteria</taxon>
        <taxon>Bacillati</taxon>
        <taxon>Actinomycetota</taxon>
        <taxon>Actinomycetes</taxon>
        <taxon>Mycobacteriales</taxon>
        <taxon>Mycobacteriaceae</taxon>
        <taxon>Mycobacterium</taxon>
        <taxon>Mycobacterium avium complex (MAC)</taxon>
    </lineage>
</organism>
<comment type="function">
    <text evidence="1">Catalyzes the attachment of threonine to tRNA(Thr) in a two-step reaction: L-threonine is first activated by ATP to form Thr-AMP and then transferred to the acceptor end of tRNA(Thr). Also edits incorrectly charged L-seryl-tRNA(Thr).</text>
</comment>
<comment type="catalytic activity">
    <reaction evidence="1">
        <text>tRNA(Thr) + L-threonine + ATP = L-threonyl-tRNA(Thr) + AMP + diphosphate + H(+)</text>
        <dbReference type="Rhea" id="RHEA:24624"/>
        <dbReference type="Rhea" id="RHEA-COMP:9670"/>
        <dbReference type="Rhea" id="RHEA-COMP:9704"/>
        <dbReference type="ChEBI" id="CHEBI:15378"/>
        <dbReference type="ChEBI" id="CHEBI:30616"/>
        <dbReference type="ChEBI" id="CHEBI:33019"/>
        <dbReference type="ChEBI" id="CHEBI:57926"/>
        <dbReference type="ChEBI" id="CHEBI:78442"/>
        <dbReference type="ChEBI" id="CHEBI:78534"/>
        <dbReference type="ChEBI" id="CHEBI:456215"/>
        <dbReference type="EC" id="6.1.1.3"/>
    </reaction>
</comment>
<comment type="cofactor">
    <cofactor evidence="1">
        <name>Zn(2+)</name>
        <dbReference type="ChEBI" id="CHEBI:29105"/>
    </cofactor>
    <text evidence="1">Binds 1 zinc ion per subunit.</text>
</comment>
<comment type="subunit">
    <text evidence="1">Homodimer.</text>
</comment>
<comment type="subcellular location">
    <subcellularLocation>
        <location evidence="1">Cytoplasm</location>
    </subcellularLocation>
</comment>
<comment type="similarity">
    <text evidence="1">Belongs to the class-II aminoacyl-tRNA synthetase family.</text>
</comment>
<sequence>MTVPATDSCPAPIRVPAGTTAAAAVRDAGLPGRGAPDAVVVVRDASGTLRDLSWVPDTDAEVVPVAANTDEGRSVIRHSAAHVLAQAVQELFPQAKLGIGPPITDGFYYDFDVPEPFTPEDLDKLEKRMRQIVKEGQLFSRRVYESKEQARAELAGEPYKLELVDDKSGDPDIMEVGGDELTAYDNLNPRTRERVWGDLCRGPHIPTTRHIPAFKLTRSSAAYWRGDQNNASLQRIYGTAWESQEALDDHLRLIEEAQRRDHRKLGSELDLFSFPDEIGSGLAVFHPRGGVVRRELEEYSRRKHIEAGYEFVNTPHITKAQLFHTSGHLDWYADGMFPPMHLDAEYDDDGTVRKPGQDYYLKPMNCPMHTLIYRSRGRSYRELPLRLFEFGTVYRYEKSGVVHGLTRARGFTMDDSHIFCTREQLHGELASLLRFVLELLGDYGLTDFYLELSTKDPDKFVGSDEVWEQATTSLADVAAESGLELVPDPGGAAFYGPKISVQARDALGRSWQMSTIQVDFNFPERFELEYTASDGTRQRPVMIHRALFGSIERFFGILTEHYAGAFPAWLAPVQAVGIPVADEHVPYLESVAAQLKSYGVRVEVDASDDRMAKKIVHHTAQKVPFMLLAGDRDVAAGAVSFRFGDRTQINGVPRDSAVDAIVKWIADRENSVPSAELVKVSSGE</sequence>
<accession>Q73WE4</accession>
<reference key="1">
    <citation type="journal article" date="2005" name="Proc. Natl. Acad. Sci. U.S.A.">
        <title>The complete genome sequence of Mycobacterium avium subspecies paratuberculosis.</title>
        <authorList>
            <person name="Li L."/>
            <person name="Bannantine J.P."/>
            <person name="Zhang Q."/>
            <person name="Amonsin A."/>
            <person name="May B.J."/>
            <person name="Alt D."/>
            <person name="Banerji N."/>
            <person name="Kanjilal S."/>
            <person name="Kapur V."/>
        </authorList>
    </citation>
    <scope>NUCLEOTIDE SEQUENCE [LARGE SCALE GENOMIC DNA]</scope>
    <source>
        <strain>ATCC BAA-968 / K-10</strain>
    </source>
</reference>
<keyword id="KW-0030">Aminoacyl-tRNA synthetase</keyword>
<keyword id="KW-0067">ATP-binding</keyword>
<keyword id="KW-0963">Cytoplasm</keyword>
<keyword id="KW-0436">Ligase</keyword>
<keyword id="KW-0479">Metal-binding</keyword>
<keyword id="KW-0547">Nucleotide-binding</keyword>
<keyword id="KW-0648">Protein biosynthesis</keyword>
<keyword id="KW-1185">Reference proteome</keyword>
<keyword id="KW-0694">RNA-binding</keyword>
<keyword id="KW-0820">tRNA-binding</keyword>
<keyword id="KW-0862">Zinc</keyword>
<feature type="chain" id="PRO_0000101009" description="Threonine--tRNA ligase">
    <location>
        <begin position="1"/>
        <end position="684"/>
    </location>
</feature>
<feature type="domain" description="TGS" evidence="2">
    <location>
        <begin position="1"/>
        <end position="66"/>
    </location>
</feature>
<feature type="region of interest" description="Catalytic" evidence="1">
    <location>
        <begin position="261"/>
        <end position="567"/>
    </location>
</feature>
<feature type="binding site" evidence="1">
    <location>
        <position position="366"/>
    </location>
    <ligand>
        <name>Zn(2+)</name>
        <dbReference type="ChEBI" id="CHEBI:29105"/>
    </ligand>
</feature>
<feature type="binding site" evidence="1">
    <location>
        <position position="417"/>
    </location>
    <ligand>
        <name>Zn(2+)</name>
        <dbReference type="ChEBI" id="CHEBI:29105"/>
    </ligand>
</feature>
<feature type="binding site" evidence="1">
    <location>
        <position position="544"/>
    </location>
    <ligand>
        <name>Zn(2+)</name>
        <dbReference type="ChEBI" id="CHEBI:29105"/>
    </ligand>
</feature>
<name>SYT_MYCPA</name>
<evidence type="ECO:0000255" key="1">
    <source>
        <dbReference type="HAMAP-Rule" id="MF_00184"/>
    </source>
</evidence>
<evidence type="ECO:0000255" key="2">
    <source>
        <dbReference type="PROSITE-ProRule" id="PRU01228"/>
    </source>
</evidence>
<proteinExistence type="inferred from homology"/>
<protein>
    <recommendedName>
        <fullName evidence="1">Threonine--tRNA ligase</fullName>
        <ecNumber evidence="1">6.1.1.3</ecNumber>
    </recommendedName>
    <alternativeName>
        <fullName evidence="1">Threonyl-tRNA synthetase</fullName>
        <shortName evidence="1">ThrRS</shortName>
    </alternativeName>
</protein>
<gene>
    <name evidence="1" type="primary">thrS</name>
    <name type="ordered locus">MAP_2716c</name>
</gene>